<organism>
    <name type="scientific">Actinobacillus pleuropneumoniae serotype 3 (strain JL03)</name>
    <dbReference type="NCBI Taxonomy" id="434271"/>
    <lineage>
        <taxon>Bacteria</taxon>
        <taxon>Pseudomonadati</taxon>
        <taxon>Pseudomonadota</taxon>
        <taxon>Gammaproteobacteria</taxon>
        <taxon>Pasteurellales</taxon>
        <taxon>Pasteurellaceae</taxon>
        <taxon>Actinobacillus</taxon>
    </lineage>
</organism>
<name>DEOC_ACTPJ</name>
<keyword id="KW-0963">Cytoplasm</keyword>
<keyword id="KW-0456">Lyase</keyword>
<keyword id="KW-0704">Schiff base</keyword>
<accession>B0BPV4</accession>
<comment type="function">
    <text evidence="1">Catalyzes a reversible aldol reaction between acetaldehyde and D-glyceraldehyde 3-phosphate to generate 2-deoxy-D-ribose 5-phosphate.</text>
</comment>
<comment type="catalytic activity">
    <reaction evidence="1">
        <text>2-deoxy-D-ribose 5-phosphate = D-glyceraldehyde 3-phosphate + acetaldehyde</text>
        <dbReference type="Rhea" id="RHEA:12821"/>
        <dbReference type="ChEBI" id="CHEBI:15343"/>
        <dbReference type="ChEBI" id="CHEBI:59776"/>
        <dbReference type="ChEBI" id="CHEBI:62877"/>
        <dbReference type="EC" id="4.1.2.4"/>
    </reaction>
</comment>
<comment type="pathway">
    <text evidence="1">Carbohydrate degradation; 2-deoxy-D-ribose 1-phosphate degradation; D-glyceraldehyde 3-phosphate and acetaldehyde from 2-deoxy-alpha-D-ribose 1-phosphate: step 2/2.</text>
</comment>
<comment type="subcellular location">
    <subcellularLocation>
        <location evidence="1">Cytoplasm</location>
    </subcellularLocation>
</comment>
<comment type="similarity">
    <text evidence="1">Belongs to the DeoC/FbaB aldolase family. DeoC type 2 subfamily.</text>
</comment>
<reference key="1">
    <citation type="journal article" date="2008" name="PLoS ONE">
        <title>Genome biology of Actinobacillus pleuropneumoniae JL03, an isolate of serotype 3 prevalent in China.</title>
        <authorList>
            <person name="Xu Z."/>
            <person name="Zhou Y."/>
            <person name="Li L."/>
            <person name="Zhou R."/>
            <person name="Xiao S."/>
            <person name="Wan Y."/>
            <person name="Zhang S."/>
            <person name="Wang K."/>
            <person name="Li W."/>
            <person name="Li L."/>
            <person name="Jin H."/>
            <person name="Kang M."/>
            <person name="Dalai B."/>
            <person name="Li T."/>
            <person name="Liu L."/>
            <person name="Cheng Y."/>
            <person name="Zhang L."/>
            <person name="Xu T."/>
            <person name="Zheng H."/>
            <person name="Pu S."/>
            <person name="Wang B."/>
            <person name="Gu W."/>
            <person name="Zhang X.L."/>
            <person name="Zhu G.-F."/>
            <person name="Wang S."/>
            <person name="Zhao G.-P."/>
            <person name="Chen H."/>
        </authorList>
    </citation>
    <scope>NUCLEOTIDE SEQUENCE [LARGE SCALE GENOMIC DNA]</scope>
    <source>
        <strain>JL03</strain>
    </source>
</reference>
<gene>
    <name evidence="1" type="primary">deoC</name>
    <name type="ordered locus">APJL_1033</name>
</gene>
<sequence length="258" mass="27589">MSLKDSAKIALSLMDLTTLNDNDTDEKVIALCQQGKTEFGTPAAVCVYPRFVPIARKALKAQGTEQVKIATVTNFPHGNDDIDIAVAETKAAVAYGADEVDVVFPYKALMAGNEQIGFELVQQCKAVCQASNVLLKVIIETGELKTAELIRKASEISIKAGADFIKTSTGKVPVNATLESARIMLETIRDLKVADRVGFKAAGGVKTAEEAAQYLALAQEILGHDWVNSDHFRFGASSLLTNLLAALNGQANQKVSGY</sequence>
<dbReference type="EC" id="4.1.2.4" evidence="1"/>
<dbReference type="EMBL" id="CP000687">
    <property type="protein sequence ID" value="ABY69589.1"/>
    <property type="molecule type" value="Genomic_DNA"/>
</dbReference>
<dbReference type="RefSeq" id="WP_012263060.1">
    <property type="nucleotide sequence ID" value="NC_010278.1"/>
</dbReference>
<dbReference type="SMR" id="B0BPV4"/>
<dbReference type="KEGG" id="apj:APJL_1033"/>
<dbReference type="HOGENOM" id="CLU_053595_3_1_6"/>
<dbReference type="UniPathway" id="UPA00002">
    <property type="reaction ID" value="UER00468"/>
</dbReference>
<dbReference type="Proteomes" id="UP000008547">
    <property type="component" value="Chromosome"/>
</dbReference>
<dbReference type="GO" id="GO:0005737">
    <property type="term" value="C:cytoplasm"/>
    <property type="evidence" value="ECO:0007669"/>
    <property type="project" value="UniProtKB-SubCell"/>
</dbReference>
<dbReference type="GO" id="GO:0004139">
    <property type="term" value="F:deoxyribose-phosphate aldolase activity"/>
    <property type="evidence" value="ECO:0007669"/>
    <property type="project" value="UniProtKB-UniRule"/>
</dbReference>
<dbReference type="GO" id="GO:0006018">
    <property type="term" value="P:2-deoxyribose 1-phosphate catabolic process"/>
    <property type="evidence" value="ECO:0007669"/>
    <property type="project" value="UniProtKB-UniRule"/>
</dbReference>
<dbReference type="GO" id="GO:0016052">
    <property type="term" value="P:carbohydrate catabolic process"/>
    <property type="evidence" value="ECO:0007669"/>
    <property type="project" value="TreeGrafter"/>
</dbReference>
<dbReference type="GO" id="GO:0009264">
    <property type="term" value="P:deoxyribonucleotide catabolic process"/>
    <property type="evidence" value="ECO:0007669"/>
    <property type="project" value="InterPro"/>
</dbReference>
<dbReference type="CDD" id="cd00959">
    <property type="entry name" value="DeoC"/>
    <property type="match status" value="1"/>
</dbReference>
<dbReference type="Gene3D" id="3.20.20.70">
    <property type="entry name" value="Aldolase class I"/>
    <property type="match status" value="1"/>
</dbReference>
<dbReference type="HAMAP" id="MF_00592">
    <property type="entry name" value="DeoC_type2"/>
    <property type="match status" value="1"/>
</dbReference>
<dbReference type="InterPro" id="IPR013785">
    <property type="entry name" value="Aldolase_TIM"/>
</dbReference>
<dbReference type="InterPro" id="IPR011343">
    <property type="entry name" value="DeoC"/>
</dbReference>
<dbReference type="InterPro" id="IPR002915">
    <property type="entry name" value="DeoC/FbaB/LacD_aldolase"/>
</dbReference>
<dbReference type="InterPro" id="IPR023649">
    <property type="entry name" value="DeoC_typeII"/>
</dbReference>
<dbReference type="NCBIfam" id="TIGR00126">
    <property type="entry name" value="deoC"/>
    <property type="match status" value="1"/>
</dbReference>
<dbReference type="PANTHER" id="PTHR10889">
    <property type="entry name" value="DEOXYRIBOSE-PHOSPHATE ALDOLASE"/>
    <property type="match status" value="1"/>
</dbReference>
<dbReference type="PANTHER" id="PTHR10889:SF3">
    <property type="entry name" value="DEOXYRIBOSE-PHOSPHATE ALDOLASE"/>
    <property type="match status" value="1"/>
</dbReference>
<dbReference type="Pfam" id="PF01791">
    <property type="entry name" value="DeoC"/>
    <property type="match status" value="1"/>
</dbReference>
<dbReference type="PIRSF" id="PIRSF001357">
    <property type="entry name" value="DeoC"/>
    <property type="match status" value="1"/>
</dbReference>
<dbReference type="SMART" id="SM01133">
    <property type="entry name" value="DeoC"/>
    <property type="match status" value="1"/>
</dbReference>
<dbReference type="SUPFAM" id="SSF51569">
    <property type="entry name" value="Aldolase"/>
    <property type="match status" value="1"/>
</dbReference>
<protein>
    <recommendedName>
        <fullName evidence="1">Deoxyribose-phosphate aldolase</fullName>
        <shortName evidence="1">DERA</shortName>
        <ecNumber evidence="1">4.1.2.4</ecNumber>
    </recommendedName>
    <alternativeName>
        <fullName evidence="1">2-deoxy-D-ribose 5-phosphate aldolase</fullName>
    </alternativeName>
    <alternativeName>
        <fullName evidence="1">Phosphodeoxyriboaldolase</fullName>
        <shortName evidence="1">Deoxyriboaldolase</shortName>
    </alternativeName>
</protein>
<proteinExistence type="inferred from homology"/>
<feature type="chain" id="PRO_1000129797" description="Deoxyribose-phosphate aldolase">
    <location>
        <begin position="1"/>
        <end position="258"/>
    </location>
</feature>
<feature type="active site" description="Proton donor/acceptor" evidence="1">
    <location>
        <position position="101"/>
    </location>
</feature>
<feature type="active site" description="Schiff-base intermediate with acetaldehyde" evidence="1">
    <location>
        <position position="166"/>
    </location>
</feature>
<feature type="active site" description="Proton donor/acceptor" evidence="1">
    <location>
        <position position="200"/>
    </location>
</feature>
<evidence type="ECO:0000255" key="1">
    <source>
        <dbReference type="HAMAP-Rule" id="MF_00592"/>
    </source>
</evidence>